<name>CURC_STRCN</name>
<keyword id="KW-0045">Antibiotic biosynthesis</keyword>
<dbReference type="EMBL" id="M33704">
    <property type="protein sequence ID" value="AAA26725.1"/>
    <property type="molecule type" value="Genomic_DNA"/>
</dbReference>
<dbReference type="EMBL" id="X62518">
    <property type="protein sequence ID" value="CAA44379.1"/>
    <property type="molecule type" value="Genomic_DNA"/>
</dbReference>
<dbReference type="PIR" id="JC1212">
    <property type="entry name" value="JC1212"/>
</dbReference>
<dbReference type="SMR" id="Q02586"/>
<dbReference type="UniPathway" id="UPA00176"/>
<dbReference type="GO" id="GO:0017000">
    <property type="term" value="P:antibiotic biosynthetic process"/>
    <property type="evidence" value="ECO:0007669"/>
    <property type="project" value="UniProtKB-KW"/>
</dbReference>
<dbReference type="CDD" id="cd06991">
    <property type="entry name" value="cupin_TcmJ-like"/>
    <property type="match status" value="1"/>
</dbReference>
<dbReference type="Gene3D" id="2.60.120.10">
    <property type="entry name" value="Jelly Rolls"/>
    <property type="match status" value="1"/>
</dbReference>
<dbReference type="InterPro" id="IPR013096">
    <property type="entry name" value="Cupin_2"/>
</dbReference>
<dbReference type="InterPro" id="IPR052044">
    <property type="entry name" value="PKS_Associated_Protein"/>
</dbReference>
<dbReference type="InterPro" id="IPR016672">
    <property type="entry name" value="Polyketide_Synth_CurC_prd"/>
</dbReference>
<dbReference type="InterPro" id="IPR014710">
    <property type="entry name" value="RmlC-like_jellyroll"/>
</dbReference>
<dbReference type="InterPro" id="IPR011051">
    <property type="entry name" value="RmlC_Cupin_sf"/>
</dbReference>
<dbReference type="PANTHER" id="PTHR36114">
    <property type="entry name" value="16.7 KDA PROTEIN IN WHIE LOCUS"/>
    <property type="match status" value="1"/>
</dbReference>
<dbReference type="PANTHER" id="PTHR36114:SF1">
    <property type="entry name" value="16.7 KDA PROTEIN IN WHIE LOCUS"/>
    <property type="match status" value="1"/>
</dbReference>
<dbReference type="Pfam" id="PF07883">
    <property type="entry name" value="Cupin_2"/>
    <property type="match status" value="1"/>
</dbReference>
<dbReference type="PIRSF" id="PIRSF016602">
    <property type="entry name" value="CurC_prd"/>
    <property type="match status" value="1"/>
</dbReference>
<dbReference type="SUPFAM" id="SSF51182">
    <property type="entry name" value="RmlC-like cupins"/>
    <property type="match status" value="1"/>
</dbReference>
<proteinExistence type="inferred from homology"/>
<sequence length="154" mass="17292">MDKMRPRVVDVKEIEPNRKRGGDLRTLLTPVTVGATSGFMGLAIMRPGERISEHYHPYSEEFVYVVEGRLEVDLDGETFPLRADQGLMIPIDMRHRFRNVGDEEARMVFHLSPLAPKPSLGHVDTEAPAISDDVKAYPLVQEESGRPERPGVLS</sequence>
<reference key="1">
    <citation type="journal article" date="1992" name="Gene">
        <title>Analysis of a polyketide synthesis-encoding gene cluster of Streptomyces curacoi.</title>
        <authorList>
            <person name="Bergh S."/>
            <person name="Uhlen M."/>
        </authorList>
    </citation>
    <scope>NUCLEOTIDE SEQUENCE [GENOMIC DNA]</scope>
    <source>
        <strain>ATCC 13385 / CBS 484.68 / DSM 40107 / JCM 4219 / NBRC 12761 / NRRL B-2901 / VKM Ac-621</strain>
    </source>
</reference>
<evidence type="ECO:0000255" key="1"/>
<evidence type="ECO:0000256" key="2">
    <source>
        <dbReference type="SAM" id="MobiDB-lite"/>
    </source>
</evidence>
<evidence type="ECO:0000305" key="3"/>
<accession>Q02586</accession>
<protein>
    <recommendedName>
        <fullName>Polyketide synthase CurC</fullName>
    </recommendedName>
</protein>
<gene>
    <name type="primary">curC</name>
</gene>
<comment type="pathway">
    <text>Antibiotic biosynthesis; curamycin biosynthesis.</text>
</comment>
<comment type="similarity">
    <text evidence="3">Belongs to the SchB/CurC family.</text>
</comment>
<organism>
    <name type="scientific">Streptomyces cyaneus</name>
    <name type="common">Streptomyces curacoi</name>
    <dbReference type="NCBI Taxonomy" id="1904"/>
    <lineage>
        <taxon>Bacteria</taxon>
        <taxon>Bacillati</taxon>
        <taxon>Actinomycetota</taxon>
        <taxon>Actinomycetes</taxon>
        <taxon>Kitasatosporales</taxon>
        <taxon>Streptomycetaceae</taxon>
        <taxon>Streptomyces</taxon>
    </lineage>
</organism>
<feature type="chain" id="PRO_0000079562" description="Polyketide synthase CurC">
    <location>
        <begin position="1"/>
        <end position="154"/>
    </location>
</feature>
<feature type="domain" description="Cupin type-2" evidence="1">
    <location>
        <begin position="42"/>
        <end position="108"/>
    </location>
</feature>
<feature type="region of interest" description="Disordered" evidence="2">
    <location>
        <begin position="133"/>
        <end position="154"/>
    </location>
</feature>
<feature type="compositionally biased region" description="Basic and acidic residues" evidence="2">
    <location>
        <begin position="143"/>
        <end position="154"/>
    </location>
</feature>